<proteinExistence type="inferred from homology"/>
<dbReference type="EC" id="2.7.7.6" evidence="1"/>
<dbReference type="EMBL" id="CR848038">
    <property type="protein sequence ID" value="CAH64108.1"/>
    <property type="molecule type" value="Genomic_DNA"/>
</dbReference>
<dbReference type="RefSeq" id="WP_011097244.1">
    <property type="nucleotide sequence ID" value="NC_004552.2"/>
</dbReference>
<dbReference type="SMR" id="Q5L5I3"/>
<dbReference type="KEGG" id="cab:CAB661"/>
<dbReference type="eggNOG" id="COG0085">
    <property type="taxonomic scope" value="Bacteria"/>
</dbReference>
<dbReference type="HOGENOM" id="CLU_000524_4_1_0"/>
<dbReference type="OrthoDB" id="9803954at2"/>
<dbReference type="Proteomes" id="UP000001012">
    <property type="component" value="Chromosome"/>
</dbReference>
<dbReference type="GO" id="GO:0000428">
    <property type="term" value="C:DNA-directed RNA polymerase complex"/>
    <property type="evidence" value="ECO:0007669"/>
    <property type="project" value="UniProtKB-KW"/>
</dbReference>
<dbReference type="GO" id="GO:0003677">
    <property type="term" value="F:DNA binding"/>
    <property type="evidence" value="ECO:0007669"/>
    <property type="project" value="UniProtKB-UniRule"/>
</dbReference>
<dbReference type="GO" id="GO:0003899">
    <property type="term" value="F:DNA-directed RNA polymerase activity"/>
    <property type="evidence" value="ECO:0007669"/>
    <property type="project" value="UniProtKB-UniRule"/>
</dbReference>
<dbReference type="GO" id="GO:0032549">
    <property type="term" value="F:ribonucleoside binding"/>
    <property type="evidence" value="ECO:0007669"/>
    <property type="project" value="InterPro"/>
</dbReference>
<dbReference type="GO" id="GO:0006351">
    <property type="term" value="P:DNA-templated transcription"/>
    <property type="evidence" value="ECO:0007669"/>
    <property type="project" value="UniProtKB-UniRule"/>
</dbReference>
<dbReference type="CDD" id="cd00653">
    <property type="entry name" value="RNA_pol_B_RPB2"/>
    <property type="match status" value="1"/>
</dbReference>
<dbReference type="FunFam" id="3.90.1800.10:FF:000001">
    <property type="entry name" value="DNA-directed RNA polymerase subunit beta"/>
    <property type="match status" value="1"/>
</dbReference>
<dbReference type="Gene3D" id="2.40.50.100">
    <property type="match status" value="1"/>
</dbReference>
<dbReference type="Gene3D" id="2.40.50.150">
    <property type="match status" value="1"/>
</dbReference>
<dbReference type="Gene3D" id="3.90.1100.10">
    <property type="match status" value="2"/>
</dbReference>
<dbReference type="Gene3D" id="2.40.270.10">
    <property type="entry name" value="DNA-directed RNA polymerase, subunit 2, domain 6"/>
    <property type="match status" value="2"/>
</dbReference>
<dbReference type="Gene3D" id="3.90.1800.10">
    <property type="entry name" value="RNA polymerase alpha subunit dimerisation domain"/>
    <property type="match status" value="1"/>
</dbReference>
<dbReference type="Gene3D" id="3.90.1110.10">
    <property type="entry name" value="RNA polymerase Rpb2, domain 2"/>
    <property type="match status" value="1"/>
</dbReference>
<dbReference type="HAMAP" id="MF_01321">
    <property type="entry name" value="RNApol_bact_RpoB"/>
    <property type="match status" value="1"/>
</dbReference>
<dbReference type="InterPro" id="IPR019462">
    <property type="entry name" value="DNA-dir_RNA_pol_bsu_external_1"/>
</dbReference>
<dbReference type="InterPro" id="IPR015712">
    <property type="entry name" value="DNA-dir_RNA_pol_su2"/>
</dbReference>
<dbReference type="InterPro" id="IPR007120">
    <property type="entry name" value="DNA-dir_RNAP_su2_dom"/>
</dbReference>
<dbReference type="InterPro" id="IPR037033">
    <property type="entry name" value="DNA-dir_RNAP_su2_hyb_sf"/>
</dbReference>
<dbReference type="InterPro" id="IPR010243">
    <property type="entry name" value="RNA_pol_bsu_bac"/>
</dbReference>
<dbReference type="InterPro" id="IPR007121">
    <property type="entry name" value="RNA_pol_bsu_CS"/>
</dbReference>
<dbReference type="InterPro" id="IPR007644">
    <property type="entry name" value="RNA_pol_bsu_protrusion"/>
</dbReference>
<dbReference type="InterPro" id="IPR007642">
    <property type="entry name" value="RNA_pol_Rpb2_2"/>
</dbReference>
<dbReference type="InterPro" id="IPR037034">
    <property type="entry name" value="RNA_pol_Rpb2_2_sf"/>
</dbReference>
<dbReference type="InterPro" id="IPR007645">
    <property type="entry name" value="RNA_pol_Rpb2_3"/>
</dbReference>
<dbReference type="InterPro" id="IPR007641">
    <property type="entry name" value="RNA_pol_Rpb2_7"/>
</dbReference>
<dbReference type="InterPro" id="IPR014724">
    <property type="entry name" value="RNA_pol_RPB2_OB-fold"/>
</dbReference>
<dbReference type="NCBIfam" id="NF001616">
    <property type="entry name" value="PRK00405.1"/>
    <property type="match status" value="1"/>
</dbReference>
<dbReference type="NCBIfam" id="TIGR02013">
    <property type="entry name" value="rpoB"/>
    <property type="match status" value="1"/>
</dbReference>
<dbReference type="PANTHER" id="PTHR20856">
    <property type="entry name" value="DNA-DIRECTED RNA POLYMERASE I SUBUNIT 2"/>
    <property type="match status" value="1"/>
</dbReference>
<dbReference type="Pfam" id="PF04563">
    <property type="entry name" value="RNA_pol_Rpb2_1"/>
    <property type="match status" value="1"/>
</dbReference>
<dbReference type="Pfam" id="PF04561">
    <property type="entry name" value="RNA_pol_Rpb2_2"/>
    <property type="match status" value="2"/>
</dbReference>
<dbReference type="Pfam" id="PF04565">
    <property type="entry name" value="RNA_pol_Rpb2_3"/>
    <property type="match status" value="1"/>
</dbReference>
<dbReference type="Pfam" id="PF10385">
    <property type="entry name" value="RNA_pol_Rpb2_45"/>
    <property type="match status" value="1"/>
</dbReference>
<dbReference type="Pfam" id="PF00562">
    <property type="entry name" value="RNA_pol_Rpb2_6"/>
    <property type="match status" value="1"/>
</dbReference>
<dbReference type="Pfam" id="PF04560">
    <property type="entry name" value="RNA_pol_Rpb2_7"/>
    <property type="match status" value="1"/>
</dbReference>
<dbReference type="SUPFAM" id="SSF64484">
    <property type="entry name" value="beta and beta-prime subunits of DNA dependent RNA-polymerase"/>
    <property type="match status" value="1"/>
</dbReference>
<dbReference type="PROSITE" id="PS01166">
    <property type="entry name" value="RNA_POL_BETA"/>
    <property type="match status" value="1"/>
</dbReference>
<name>RPOB_CHLAB</name>
<protein>
    <recommendedName>
        <fullName evidence="1">DNA-directed RNA polymerase subunit beta</fullName>
        <shortName evidence="1">RNAP subunit beta</shortName>
        <ecNumber evidence="1">2.7.7.6</ecNumber>
    </recommendedName>
    <alternativeName>
        <fullName evidence="1">RNA polymerase subunit beta</fullName>
    </alternativeName>
    <alternativeName>
        <fullName evidence="1">Transcriptase subunit beta</fullName>
    </alternativeName>
</protein>
<reference key="1">
    <citation type="journal article" date="2005" name="Genome Res.">
        <title>The Chlamydophila abortus genome sequence reveals an array of variable proteins that contribute to interspecies variation.</title>
        <authorList>
            <person name="Thomson N.R."/>
            <person name="Yeats C."/>
            <person name="Bell K."/>
            <person name="Holden M.T.G."/>
            <person name="Bentley S.D."/>
            <person name="Livingstone M."/>
            <person name="Cerdeno-Tarraga A.-M."/>
            <person name="Harris B."/>
            <person name="Doggett J."/>
            <person name="Ormond D."/>
            <person name="Mungall K."/>
            <person name="Clarke K."/>
            <person name="Feltwell T."/>
            <person name="Hance Z."/>
            <person name="Sanders M."/>
            <person name="Quail M.A."/>
            <person name="Price C."/>
            <person name="Barrell B.G."/>
            <person name="Parkhill J."/>
            <person name="Longbottom D."/>
        </authorList>
    </citation>
    <scope>NUCLEOTIDE SEQUENCE [LARGE SCALE GENOMIC DNA]</scope>
    <source>
        <strain>DSM 27085 / S26/3</strain>
    </source>
</reference>
<sequence>MFKCPERVSVKKKEDILDLPNLIEIQIKSYKQFLQIGKLAEERDNIGLEEVFREIFPIKSYNEATILEYLSYNLGVPKYSPDECIRRGITYSVTLKVRFRLTDETGIKEEEVYMGTIPIMTDKGTFIINGAERVVVSQVHRSPGINFEQEKHSKGNILFSFRIIPYRGSWLEAIFDINDLIYIHIDRKKRRRKILAITFIRALGYSSDADIIEEFFQIEEHSLKSEKDFSFLVGKILADNVLDEASSLVYGKAGEKLSTAMLKRMLDANISTLKIAVEADENHPIIKMLAKDPTDSYEAALKDFYRRLRPGEPATLANARSTIMRLFFDPKRYNLGRVGRYKLNRKLGFPMDEESLAQVTLRKEDVIGALKYLIRLKMGDEKASIDDIDHLANRRVRSVGELIQNQCRSGLARMEKIIRERMNLFDFSSDTLIPGKIISAKGLASVLKDFFGRSQLSQFMDQTNPVAELTHKRRLSALGPGGLNRERAGFEVRDVHASHYGRICPIETPEGPNIGLITSLSSFAKINEFGFIETPYRIVRDGVVTDEIEYMTADVEEECVIAQASANLDEYNMFVDPVCWARYRGEAFEADTSTVTHMDVSPKQLVSIVTGLIPFLEHDDANRALMGSNMQRQAVPLLKTEAPIVGTGLEARAAKDSGAIVVAEEDGVVEYVDGYKVVIAAKHHPTLKRTYDLKKFLRSNSGTCINQRPLCSVGDVVVKGDVIADGPATDKGELALGKNILVAFMPWYGYNFEDAIIISEKLIKQDAYTSIYIEEFELTARDTKLGKEEITRDIPNVSEEVLANLGEDGIIRIGAEVKPGDILVGKITPKSETELAPEERLLRAIFGEKAADVKDASLTVPPGTEGVVMDVKVFSRKDRLSKSDDELVEEAVHLKDLQKGYKNQISVLKIEYREKLGALLLNEKAPASIIHRRTADILVQEGTVFDQETIELLEQESLVDLLMPPCDMYDVLKSLLSDYETSLQRLEVNYKTEVEHIREGDADLDHGVIRQVKVYVASKRKLQVGDKMAGRHGNKGVVSKIVPEADMPYLANGETVQMILNPLGVPSRMNLGQVLETHLGYAAKTAGIHVKTPVFEGFPESRIWDMMIEQGLPADGKSYLYDGKTGERFDNTVVIGYIYMLKLSHLIADKIHARSIGPYSLVTQQPLGGKAQMGGQRFGEMEVWALEAYGVAHMLQEILTVKSDDVTGRTRIYESIVKGENLLKSGTPESFNVLIKEMQGLGLDVRPMVVDA</sequence>
<accession>Q5L5I3</accession>
<feature type="chain" id="PRO_0000224044" description="DNA-directed RNA polymerase subunit beta">
    <location>
        <begin position="1"/>
        <end position="1252"/>
    </location>
</feature>
<keyword id="KW-0240">DNA-directed RNA polymerase</keyword>
<keyword id="KW-0548">Nucleotidyltransferase</keyword>
<keyword id="KW-0804">Transcription</keyword>
<keyword id="KW-0808">Transferase</keyword>
<gene>
    <name evidence="1" type="primary">rpoB</name>
    <name type="ordered locus">CAB661</name>
</gene>
<evidence type="ECO:0000255" key="1">
    <source>
        <dbReference type="HAMAP-Rule" id="MF_01321"/>
    </source>
</evidence>
<organism>
    <name type="scientific">Chlamydia abortus (strain DSM 27085 / S26/3)</name>
    <name type="common">Chlamydophila abortus</name>
    <dbReference type="NCBI Taxonomy" id="218497"/>
    <lineage>
        <taxon>Bacteria</taxon>
        <taxon>Pseudomonadati</taxon>
        <taxon>Chlamydiota</taxon>
        <taxon>Chlamydiia</taxon>
        <taxon>Chlamydiales</taxon>
        <taxon>Chlamydiaceae</taxon>
        <taxon>Chlamydia/Chlamydophila group</taxon>
        <taxon>Chlamydia</taxon>
    </lineage>
</organism>
<comment type="function">
    <text evidence="1">DNA-dependent RNA polymerase catalyzes the transcription of DNA into RNA using the four ribonucleoside triphosphates as substrates.</text>
</comment>
<comment type="catalytic activity">
    <reaction evidence="1">
        <text>RNA(n) + a ribonucleoside 5'-triphosphate = RNA(n+1) + diphosphate</text>
        <dbReference type="Rhea" id="RHEA:21248"/>
        <dbReference type="Rhea" id="RHEA-COMP:14527"/>
        <dbReference type="Rhea" id="RHEA-COMP:17342"/>
        <dbReference type="ChEBI" id="CHEBI:33019"/>
        <dbReference type="ChEBI" id="CHEBI:61557"/>
        <dbReference type="ChEBI" id="CHEBI:140395"/>
        <dbReference type="EC" id="2.7.7.6"/>
    </reaction>
</comment>
<comment type="subunit">
    <text evidence="1">The RNAP catalytic core consists of 2 alpha, 1 beta, 1 beta' and 1 omega subunit. When a sigma factor is associated with the core the holoenzyme is formed, which can initiate transcription.</text>
</comment>
<comment type="similarity">
    <text evidence="1">Belongs to the RNA polymerase beta chain family.</text>
</comment>